<evidence type="ECO:0000256" key="1">
    <source>
        <dbReference type="SAM" id="MobiDB-lite"/>
    </source>
</evidence>
<evidence type="ECO:0000305" key="2"/>
<proteinExistence type="evidence at transcript level"/>
<gene>
    <name type="primary">TSR2</name>
</gene>
<reference key="1">
    <citation type="submission" date="2005-08" db="EMBL/GenBank/DDBJ databases">
        <authorList>
            <consortium name="NIH - Mammalian Gene Collection (MGC) project"/>
        </authorList>
    </citation>
    <scope>NUCLEOTIDE SEQUENCE [LARGE SCALE MRNA]</scope>
    <source>
        <strain>Crossbred X Angus</strain>
        <tissue>Ileum</tissue>
    </source>
</reference>
<keyword id="KW-1185">Reference proteome</keyword>
<keyword id="KW-0698">rRNA processing</keyword>
<comment type="function">
    <text evidence="2">May be involved in 20S pre-rRNA processing.</text>
</comment>
<comment type="similarity">
    <text evidence="2">Belongs to the TSR2 family.</text>
</comment>
<feature type="chain" id="PRO_0000285586" description="Pre-rRNA-processing protein TSR2 homolog">
    <location>
        <begin position="1"/>
        <end position="190"/>
    </location>
</feature>
<feature type="region of interest" description="Disordered" evidence="1">
    <location>
        <begin position="152"/>
        <end position="176"/>
    </location>
</feature>
<organism>
    <name type="scientific">Bos taurus</name>
    <name type="common">Bovine</name>
    <dbReference type="NCBI Taxonomy" id="9913"/>
    <lineage>
        <taxon>Eukaryota</taxon>
        <taxon>Metazoa</taxon>
        <taxon>Chordata</taxon>
        <taxon>Craniata</taxon>
        <taxon>Vertebrata</taxon>
        <taxon>Euteleostomi</taxon>
        <taxon>Mammalia</taxon>
        <taxon>Eutheria</taxon>
        <taxon>Laurasiatheria</taxon>
        <taxon>Artiodactyla</taxon>
        <taxon>Ruminantia</taxon>
        <taxon>Pecora</taxon>
        <taxon>Bovidae</taxon>
        <taxon>Bovinae</taxon>
        <taxon>Bos</taxon>
    </lineage>
</organism>
<name>TSR2_BOVIN</name>
<sequence>MADAAEDSRALFGAAVRAALEAWPALQIAVENGFGGVYSQEKAEWLGGAVEEYFFRNADLELDEVEDFLGELMMNEFDTVVEDGSLPQVSQQLQTMFHHFQKGDRAALKEMASLITQRKCKVRATALPTAGETDEDDDANSVEEMEVAATNDGAATDGVCPQPEPSGPDSQTIKEEDIVEDGWTIVRRKK</sequence>
<dbReference type="EMBL" id="BC102505">
    <property type="protein sequence ID" value="AAI02506.1"/>
    <property type="molecule type" value="mRNA"/>
</dbReference>
<dbReference type="RefSeq" id="NP_001030269.1">
    <property type="nucleotide sequence ID" value="NM_001035097.3"/>
</dbReference>
<dbReference type="SMR" id="Q3T090"/>
<dbReference type="FunCoup" id="Q3T090">
    <property type="interactions" value="1961"/>
</dbReference>
<dbReference type="STRING" id="9913.ENSBTAP00000021080"/>
<dbReference type="PaxDb" id="9913-ENSBTAP00000021080"/>
<dbReference type="GeneID" id="511210"/>
<dbReference type="KEGG" id="bta:511210"/>
<dbReference type="CTD" id="90121"/>
<dbReference type="eggNOG" id="KOG4032">
    <property type="taxonomic scope" value="Eukaryota"/>
</dbReference>
<dbReference type="HOGENOM" id="CLU_074896_2_0_1"/>
<dbReference type="InParanoid" id="Q3T090"/>
<dbReference type="OMA" id="QSNWGGP"/>
<dbReference type="OrthoDB" id="263560at2759"/>
<dbReference type="TreeFam" id="TF314018"/>
<dbReference type="Proteomes" id="UP000009136">
    <property type="component" value="Unplaced"/>
</dbReference>
<dbReference type="GO" id="GO:0005634">
    <property type="term" value="C:nucleus"/>
    <property type="evidence" value="ECO:0000318"/>
    <property type="project" value="GO_Central"/>
</dbReference>
<dbReference type="GO" id="GO:0000462">
    <property type="term" value="P:maturation of SSU-rRNA from tricistronic rRNA transcript (SSU-rRNA, 5.8S rRNA, LSU-rRNA)"/>
    <property type="evidence" value="ECO:0000318"/>
    <property type="project" value="GO_Central"/>
</dbReference>
<dbReference type="InterPro" id="IPR019398">
    <property type="entry name" value="Pre-rRNA_process_TSR2"/>
</dbReference>
<dbReference type="PANTHER" id="PTHR21250">
    <property type="entry name" value="PRE-RRNA-PROCESSING PROTEIN TSR2 HOMOLOG"/>
    <property type="match status" value="1"/>
</dbReference>
<dbReference type="Pfam" id="PF10273">
    <property type="entry name" value="WGG"/>
    <property type="match status" value="1"/>
</dbReference>
<protein>
    <recommendedName>
        <fullName>Pre-rRNA-processing protein TSR2 homolog</fullName>
    </recommendedName>
</protein>
<accession>Q3T090</accession>